<sequence length="708" mass="76823">MERLIDNSHGWPGRMVWLLAACLGSAAAFAQTGPAAQAAAAVQRVDGDFIRANAARTPDWPTIGVDYAETRYSRLDQINAANVKDLGLAWSYNLESTRGVEATPVVVDGIMYVSASWSVVHAIDTRTGNRIWTYDPQIDRSTGFKGCCDVVNRGVALWKGKVYVGAWDGRLIALDAATGKEVWHQNTFEGQKGSLTITGAPRVFKGKVIIGKRGAEYGVRGYITAYDAETGERKWRWFSVPGDPSKPFEDESMKRAARTWDPSGKWWEAGGGGTMWDSMTFDAELNTMYVGTGNGSPWSHKVRSPKGGDNLYLASIVALDPDTGKYKWHYQETPGDNWDYTSTQPMILADIKIAGKPRKVILHAPKNGFFFVLDRTNGKFISAKNFVPVNWASGYDKHGKPIGIAAARDGSKPQDAVPGPYGAHNWHPMSFNPQTGLVYLPAQNVPVNLMDDKKWEFNQAGPGKPQSGTGWNTAKFFNAEPPKSKPFGRLLAWDPVAQKAAWSVEHVSPWNGGTLTTAGNVVFQGTADGRLVAYHAATGEKLWEAPTGTGVVAAPSTYMVDGRQYVSVAVGWGGVYGLAARATERQGPGTVYTFVVAGKARMPEFVAQRTGQLLQGVKYDPAKVEAGTMLYVANCVFCHGVPGVDRGGNIPNLGYMDASYIENLPNFVFKGPAMVRGMPDFTGKLSGDDVESLKAFIQGTADAIRPKP</sequence>
<dbReference type="EC" id="1.1.9.1" evidence="3"/>
<dbReference type="EMBL" id="X81880">
    <property type="protein sequence ID" value="CAA57464.1"/>
    <property type="molecule type" value="Genomic_DNA"/>
</dbReference>
<dbReference type="PIR" id="S62366">
    <property type="entry name" value="S52317"/>
</dbReference>
<dbReference type="PDB" id="1KB0">
    <property type="method" value="X-ray"/>
    <property type="resolution" value="1.44 A"/>
    <property type="chains" value="A=32-708"/>
</dbReference>
<dbReference type="PDBsum" id="1KB0"/>
<dbReference type="SMR" id="Q46444"/>
<dbReference type="DrugBank" id="DB03051">
    <property type="generic name" value="(S)-2-Tetrahydrofuroic acid"/>
</dbReference>
<dbReference type="DrugBank" id="DB03679">
    <property type="generic name" value="2-Hydroxy-Tryptophan"/>
</dbReference>
<dbReference type="DrugBank" id="DB03317">
    <property type="generic name" value="Ferroheme C"/>
</dbReference>
<dbReference type="DrugBank" id="DB03205">
    <property type="generic name" value="Pyrroloquinoline Quinone"/>
</dbReference>
<dbReference type="KEGG" id="ag:CAA57464"/>
<dbReference type="BioCyc" id="MetaCyc:MONOMER-15520"/>
<dbReference type="BRENDA" id="1.1.9.1">
    <property type="organism ID" value="1590"/>
</dbReference>
<dbReference type="EvolutionaryTrace" id="Q46444"/>
<dbReference type="GO" id="GO:0016020">
    <property type="term" value="C:membrane"/>
    <property type="evidence" value="ECO:0007669"/>
    <property type="project" value="InterPro"/>
</dbReference>
<dbReference type="GO" id="GO:0030288">
    <property type="term" value="C:outer membrane-bounded periplasmic space"/>
    <property type="evidence" value="ECO:0007669"/>
    <property type="project" value="InterPro"/>
</dbReference>
<dbReference type="GO" id="GO:0005509">
    <property type="term" value="F:calcium ion binding"/>
    <property type="evidence" value="ECO:0007669"/>
    <property type="project" value="InterPro"/>
</dbReference>
<dbReference type="GO" id="GO:0009055">
    <property type="term" value="F:electron transfer activity"/>
    <property type="evidence" value="ECO:0007669"/>
    <property type="project" value="InterPro"/>
</dbReference>
<dbReference type="GO" id="GO:0020037">
    <property type="term" value="F:heme binding"/>
    <property type="evidence" value="ECO:0007669"/>
    <property type="project" value="InterPro"/>
</dbReference>
<dbReference type="GO" id="GO:0016614">
    <property type="term" value="F:oxidoreductase activity, acting on CH-OH group of donors"/>
    <property type="evidence" value="ECO:0007669"/>
    <property type="project" value="InterPro"/>
</dbReference>
<dbReference type="CDD" id="cd10279">
    <property type="entry name" value="PQQ_ADH_II"/>
    <property type="match status" value="1"/>
</dbReference>
<dbReference type="Gene3D" id="1.10.760.10">
    <property type="entry name" value="Cytochrome c-like domain"/>
    <property type="match status" value="1"/>
</dbReference>
<dbReference type="Gene3D" id="2.140.10.10">
    <property type="entry name" value="Quinoprotein alcohol dehydrogenase-like superfamily"/>
    <property type="match status" value="1"/>
</dbReference>
<dbReference type="InterPro" id="IPR009056">
    <property type="entry name" value="Cyt_c-like_dom"/>
</dbReference>
<dbReference type="InterPro" id="IPR036909">
    <property type="entry name" value="Cyt_c-like_dom_sf"/>
</dbReference>
<dbReference type="InterPro" id="IPR018391">
    <property type="entry name" value="PQQ_b-propeller_rpt"/>
</dbReference>
<dbReference type="InterPro" id="IPR017512">
    <property type="entry name" value="PQQ_MeOH/EtOH_DH"/>
</dbReference>
<dbReference type="InterPro" id="IPR002372">
    <property type="entry name" value="PQQ_rpt_dom"/>
</dbReference>
<dbReference type="InterPro" id="IPR011047">
    <property type="entry name" value="Quinoprotein_ADH-like_sf"/>
</dbReference>
<dbReference type="InterPro" id="IPR001479">
    <property type="entry name" value="Quinoprotein_DH_CS"/>
</dbReference>
<dbReference type="NCBIfam" id="TIGR03075">
    <property type="entry name" value="PQQ_enz_alc_DH"/>
    <property type="match status" value="1"/>
</dbReference>
<dbReference type="PANTHER" id="PTHR32303">
    <property type="entry name" value="QUINOPROTEIN ALCOHOL DEHYDROGENASE (CYTOCHROME C)"/>
    <property type="match status" value="1"/>
</dbReference>
<dbReference type="Pfam" id="PF13442">
    <property type="entry name" value="Cytochrome_CBB3"/>
    <property type="match status" value="1"/>
</dbReference>
<dbReference type="Pfam" id="PF01011">
    <property type="entry name" value="PQQ"/>
    <property type="match status" value="2"/>
</dbReference>
<dbReference type="SMART" id="SM00564">
    <property type="entry name" value="PQQ"/>
    <property type="match status" value="5"/>
</dbReference>
<dbReference type="SUPFAM" id="SSF46626">
    <property type="entry name" value="Cytochrome c"/>
    <property type="match status" value="1"/>
</dbReference>
<dbReference type="SUPFAM" id="SSF50998">
    <property type="entry name" value="Quinoprotein alcohol dehydrogenase-like"/>
    <property type="match status" value="1"/>
</dbReference>
<dbReference type="PROSITE" id="PS00364">
    <property type="entry name" value="BACTERIAL_PQQ_2"/>
    <property type="match status" value="1"/>
</dbReference>
<dbReference type="PROSITE" id="PS51007">
    <property type="entry name" value="CYTC"/>
    <property type="match status" value="1"/>
</dbReference>
<organism>
    <name type="scientific">Comamonas testosteroni</name>
    <name type="common">Pseudomonas testosteroni</name>
    <dbReference type="NCBI Taxonomy" id="285"/>
    <lineage>
        <taxon>Bacteria</taxon>
        <taxon>Pseudomonadati</taxon>
        <taxon>Pseudomonadota</taxon>
        <taxon>Betaproteobacteria</taxon>
        <taxon>Burkholderiales</taxon>
        <taxon>Comamonadaceae</taxon>
        <taxon>Comamonas</taxon>
    </lineage>
</organism>
<name>QHED_COMTE</name>
<gene>
    <name evidence="8" type="primary">qheDH</name>
</gene>
<reference key="1">
    <citation type="journal article" date="1996" name="Eur. J. Biochem.">
        <title>Characterization of the gene encoding quinohaemoprotein ethanol dehydrogenase of Comamonas testosteroni.</title>
        <authorList>
            <person name="Stoorvogel J."/>
            <person name="Kraayveld D.E."/>
            <person name="van Sluis C.A."/>
            <person name="Jongejan J.A."/>
            <person name="De Vries S."/>
            <person name="Duine J.A."/>
        </authorList>
    </citation>
    <scope>NUCLEOTIDE SEQUENCE [GENOMIC DNA]</scope>
    <scope>PROTEIN SEQUENCE OF 32-54</scope>
    <scope>COFACTOR</scope>
    <source>
        <strain>ATCC 15667 / CCUG 14479 / IAM 12408 / JCM 13048 / LMG 7106 / NCIMB 9682 / 2168</strain>
    </source>
</reference>
<reference key="2">
    <citation type="journal article" date="1995" name="Eur. J. Biochem.">
        <title>Quinohaemoprotein ethanol dehydrogenase from Comamonas testosteroni. Purification, characterization, and reconstitution of the apoenzyme with pyrroloquinoline quinone analogues.</title>
        <authorList>
            <person name="de Jong G.A.H."/>
            <person name="Geerlof A."/>
            <person name="Stoorvogel J."/>
            <person name="Jongejan J.A."/>
            <person name="De Vries S."/>
            <person name="Duine J.A."/>
        </authorList>
    </citation>
    <scope>PROTEIN SEQUENCE OF 32-54 AND 477-490</scope>
    <scope>FUNCTION</scope>
    <scope>COFACTOR</scope>
    <source>
        <strain>ATCC 15667 / CCUG 14479 / IAM 12408 / JCM 13048 / LMG 7106 / NCIMB 9682 / 2168</strain>
    </source>
</reference>
<reference key="3">
    <citation type="journal article" date="1986" name="Biochem. J.">
        <title>Quinohaemoprotein alcohol dehydrogenase apoenzyme from Pseudomonas testosteroni.</title>
        <authorList>
            <person name="Groen B.W."/>
            <person name="van Kleef M.A."/>
            <person name="Duine J.A."/>
        </authorList>
    </citation>
    <scope>FUNCTION</scope>
    <scope>CATALYTIC ACTIVITY</scope>
    <scope>BIOPHYSICOCHEMICAL PROPERTIES</scope>
    <scope>COFACTOR</scope>
    <scope>SUBUNIT</scope>
    <scope>SUBSTRATE SPECIFICITY</scope>
    <scope>SUBCELLULAR LOCATION</scope>
    <source>
        <strain>ATCC 15667 / CCUG 14479 / IAM 12408 / JCM 13048 / LMG 7106 / NCIMB 9682 / 2168</strain>
    </source>
</reference>
<reference key="4">
    <citation type="journal article" date="2001" name="Acta Crystallogr. D">
        <title>Crystallization of quinohaemoprotein alcohol dehydrogenase from Comamonas testosteroni: crystals with unique optical properties.</title>
        <authorList>
            <person name="Oubrie A."/>
            <person name="Huizinga E.G."/>
            <person name="Rozeboom H.J."/>
            <person name="Kalk K.H."/>
            <person name="de Jong G.A.H."/>
            <person name="Duine J.A."/>
            <person name="Dijkstra B.W."/>
        </authorList>
    </citation>
    <scope>CRYSTALLIZATION</scope>
</reference>
<reference key="5">
    <citation type="journal article" date="2002" name="J. Biol. Chem.">
        <title>Crystal structure of quinohemoprotein alcohol dehydrogenase from Comamonas testosteroni: structural basis for substrate oxidation and electron transfer.</title>
        <authorList>
            <person name="Oubrie A."/>
            <person name="Rozeboom H.J."/>
            <person name="Kalk K.H."/>
            <person name="Huizinga E.G."/>
            <person name="Dijkstra B.W."/>
        </authorList>
    </citation>
    <scope>X-RAY CRYSTALLOGRAPHY (1.44 ANGSTROMS) IN COMPLEX WITH HEME C</scope>
    <scope>PYRROLOQUINOLINE QUINONE AND CALCIUM IONS</scope>
    <scope>COFACTOR</scope>
    <scope>ACTIVE SITE</scope>
    <scope>DISULFIDE BOND</scope>
    <scope>REACTION MECHANISM</scope>
</reference>
<proteinExistence type="evidence at protein level"/>
<accession>Q46444</accession>
<feature type="signal peptide" evidence="4 5">
    <location>
        <begin position="1"/>
        <end position="31"/>
    </location>
</feature>
<feature type="chain" id="PRO_0000025563" description="Quinohemoprotein alcohol dehydrogenase">
    <location>
        <begin position="32"/>
        <end position="708"/>
    </location>
</feature>
<feature type="domain" description="Cytochrome c" evidence="1">
    <location>
        <begin position="619"/>
        <end position="708"/>
    </location>
</feature>
<feature type="active site" description="Proton acceptor" evidence="10">
    <location>
        <position position="339"/>
    </location>
</feature>
<feature type="binding site" evidence="2 14">
    <location>
        <position position="101"/>
    </location>
    <ligand>
        <name>pyrroloquinoline quinone</name>
        <dbReference type="ChEBI" id="CHEBI:58442"/>
    </ligand>
</feature>
<feature type="binding site" evidence="2 14">
    <location>
        <position position="153"/>
    </location>
    <ligand>
        <name>pyrroloquinoline quinone</name>
        <dbReference type="ChEBI" id="CHEBI:58442"/>
    </ligand>
</feature>
<feature type="binding site" evidence="2 14">
    <location>
        <position position="198"/>
    </location>
    <ligand>
        <name>pyrroloquinoline quinone</name>
        <dbReference type="ChEBI" id="CHEBI:58442"/>
    </ligand>
</feature>
<feature type="binding site" evidence="2 14">
    <location>
        <begin position="214"/>
        <end position="215"/>
    </location>
    <ligand>
        <name>pyrroloquinoline quinone</name>
        <dbReference type="ChEBI" id="CHEBI:58442"/>
    </ligand>
</feature>
<feature type="binding site" evidence="2 14">
    <location>
        <position position="216"/>
    </location>
    <ligand>
        <name>Ca(2+)</name>
        <dbReference type="ChEBI" id="CHEBI:29108"/>
    </ligand>
</feature>
<feature type="binding site" evidence="2 14">
    <location>
        <position position="274"/>
    </location>
    <ligand>
        <name>pyrroloquinoline quinone</name>
        <dbReference type="ChEBI" id="CHEBI:58442"/>
    </ligand>
</feature>
<feature type="binding site" evidence="2 14">
    <location>
        <position position="294"/>
    </location>
    <ligand>
        <name>Ca(2+)</name>
        <dbReference type="ChEBI" id="CHEBI:29108"/>
    </ligand>
</feature>
<feature type="binding site" evidence="2 14">
    <location>
        <position position="339"/>
    </location>
    <ligand>
        <name>Ca(2+)</name>
        <dbReference type="ChEBI" id="CHEBI:29108"/>
    </ligand>
</feature>
<feature type="binding site" evidence="2 14">
    <location>
        <position position="366"/>
    </location>
    <ligand>
        <name>pyrroloquinoline quinone</name>
        <dbReference type="ChEBI" id="CHEBI:58442"/>
    </ligand>
</feature>
<feature type="binding site" evidence="2 14">
    <location>
        <begin position="425"/>
        <end position="426"/>
    </location>
    <ligand>
        <name>pyrroloquinoline quinone</name>
        <dbReference type="ChEBI" id="CHEBI:58442"/>
    </ligand>
</feature>
<feature type="binding site" evidence="2 14">
    <location>
        <position position="575"/>
    </location>
    <ligand>
        <name>pyrroloquinoline quinone</name>
        <dbReference type="ChEBI" id="CHEBI:58442"/>
    </ligand>
</feature>
<feature type="binding site" description="covalent" evidence="2 14">
    <location>
        <position position="635"/>
    </location>
    <ligand>
        <name>heme c</name>
        <dbReference type="ChEBI" id="CHEBI:61717"/>
    </ligand>
</feature>
<feature type="binding site" description="covalent" evidence="2 14">
    <location>
        <position position="638"/>
    </location>
    <ligand>
        <name>heme c</name>
        <dbReference type="ChEBI" id="CHEBI:61717"/>
    </ligand>
</feature>
<feature type="binding site" description="axial binding residue" evidence="2 14">
    <location>
        <position position="639"/>
    </location>
    <ligand>
        <name>heme c</name>
        <dbReference type="ChEBI" id="CHEBI:61717"/>
    </ligand>
    <ligandPart>
        <name>Fe</name>
        <dbReference type="ChEBI" id="CHEBI:18248"/>
    </ligandPart>
</feature>
<feature type="binding site" description="axial binding residue" evidence="2 14">
    <location>
        <position position="678"/>
    </location>
    <ligand>
        <name>heme c</name>
        <dbReference type="ChEBI" id="CHEBI:61717"/>
    </ligand>
    <ligandPart>
        <name>Fe</name>
        <dbReference type="ChEBI" id="CHEBI:18248"/>
    </ligandPart>
</feature>
<feature type="disulfide bond" evidence="2 14">
    <location>
        <begin position="147"/>
        <end position="148"/>
    </location>
</feature>
<feature type="helix" evidence="15">
    <location>
        <begin position="33"/>
        <end position="43"/>
    </location>
</feature>
<feature type="helix" evidence="15">
    <location>
        <begin position="47"/>
        <end position="52"/>
    </location>
</feature>
<feature type="helix" evidence="15">
    <location>
        <begin position="53"/>
        <end position="55"/>
    </location>
</feature>
<feature type="turn" evidence="15">
    <location>
        <begin position="80"/>
        <end position="82"/>
    </location>
</feature>
<feature type="helix" evidence="15">
    <location>
        <begin position="83"/>
        <end position="85"/>
    </location>
</feature>
<feature type="strand" evidence="15">
    <location>
        <begin position="86"/>
        <end position="93"/>
    </location>
</feature>
<feature type="strand" evidence="15">
    <location>
        <begin position="105"/>
        <end position="107"/>
    </location>
</feature>
<feature type="strand" evidence="15">
    <location>
        <begin position="110"/>
        <end position="114"/>
    </location>
</feature>
<feature type="helix" evidence="15">
    <location>
        <begin position="116"/>
        <end position="118"/>
    </location>
</feature>
<feature type="strand" evidence="15">
    <location>
        <begin position="120"/>
        <end position="124"/>
    </location>
</feature>
<feature type="turn" evidence="15">
    <location>
        <begin position="125"/>
        <end position="127"/>
    </location>
</feature>
<feature type="strand" evidence="15">
    <location>
        <begin position="130"/>
        <end position="134"/>
    </location>
</feature>
<feature type="helix" evidence="15">
    <location>
        <begin position="140"/>
        <end position="145"/>
    </location>
</feature>
<feature type="strand" evidence="15">
    <location>
        <begin position="146"/>
        <end position="148"/>
    </location>
</feature>
<feature type="strand" evidence="15">
    <location>
        <begin position="156"/>
        <end position="158"/>
    </location>
</feature>
<feature type="strand" evidence="15">
    <location>
        <begin position="161"/>
        <end position="165"/>
    </location>
</feature>
<feature type="strand" evidence="15">
    <location>
        <begin position="169"/>
        <end position="175"/>
    </location>
</feature>
<feature type="turn" evidence="15">
    <location>
        <begin position="176"/>
        <end position="178"/>
    </location>
</feature>
<feature type="strand" evidence="15">
    <location>
        <begin position="181"/>
        <end position="186"/>
    </location>
</feature>
<feature type="turn" evidence="15">
    <location>
        <begin position="187"/>
        <end position="190"/>
    </location>
</feature>
<feature type="strand" evidence="15">
    <location>
        <begin position="202"/>
        <end position="204"/>
    </location>
</feature>
<feature type="strand" evidence="15">
    <location>
        <begin position="207"/>
        <end position="210"/>
    </location>
</feature>
<feature type="turn" evidence="15">
    <location>
        <begin position="215"/>
        <end position="217"/>
    </location>
</feature>
<feature type="strand" evidence="15">
    <location>
        <begin position="222"/>
        <end position="227"/>
    </location>
</feature>
<feature type="turn" evidence="15">
    <location>
        <begin position="228"/>
        <end position="230"/>
    </location>
</feature>
<feature type="strand" evidence="15">
    <location>
        <begin position="233"/>
        <end position="240"/>
    </location>
</feature>
<feature type="helix" evidence="15">
    <location>
        <begin position="251"/>
        <end position="257"/>
    </location>
</feature>
<feature type="helix" evidence="15">
    <location>
        <begin position="262"/>
        <end position="264"/>
    </location>
</feature>
<feature type="turn" evidence="15">
    <location>
        <begin position="266"/>
        <end position="269"/>
    </location>
</feature>
<feature type="strand" evidence="15">
    <location>
        <begin position="279"/>
        <end position="282"/>
    </location>
</feature>
<feature type="turn" evidence="15">
    <location>
        <begin position="283"/>
        <end position="286"/>
    </location>
</feature>
<feature type="strand" evidence="15">
    <location>
        <begin position="287"/>
        <end position="291"/>
    </location>
</feature>
<feature type="strand" evidence="15">
    <location>
        <begin position="295"/>
        <end position="298"/>
    </location>
</feature>
<feature type="helix" evidence="15">
    <location>
        <begin position="300"/>
        <end position="303"/>
    </location>
</feature>
<feature type="turn" evidence="15">
    <location>
        <begin position="311"/>
        <end position="314"/>
    </location>
</feature>
<feature type="strand" evidence="15">
    <location>
        <begin position="315"/>
        <end position="319"/>
    </location>
</feature>
<feature type="turn" evidence="15">
    <location>
        <begin position="321"/>
        <end position="323"/>
    </location>
</feature>
<feature type="strand" evidence="15">
    <location>
        <begin position="326"/>
        <end position="333"/>
    </location>
</feature>
<feature type="strand" evidence="15">
    <location>
        <begin position="347"/>
        <end position="353"/>
    </location>
</feature>
<feature type="strand" evidence="15">
    <location>
        <begin position="356"/>
        <end position="363"/>
    </location>
</feature>
<feature type="strand" evidence="15">
    <location>
        <begin position="368"/>
        <end position="374"/>
    </location>
</feature>
<feature type="turn" evidence="15">
    <location>
        <begin position="375"/>
        <end position="377"/>
    </location>
</feature>
<feature type="strand" evidence="15">
    <location>
        <begin position="380"/>
        <end position="387"/>
    </location>
</feature>
<feature type="strand" evidence="15">
    <location>
        <begin position="390"/>
        <end position="395"/>
    </location>
</feature>
<feature type="strand" evidence="15">
    <location>
        <begin position="401"/>
        <end position="403"/>
    </location>
</feature>
<feature type="helix" evidence="15">
    <location>
        <begin position="405"/>
        <end position="408"/>
    </location>
</feature>
<feature type="strand" evidence="15">
    <location>
        <begin position="430"/>
        <end position="432"/>
    </location>
</feature>
<feature type="turn" evidence="15">
    <location>
        <begin position="433"/>
        <end position="436"/>
    </location>
</feature>
<feature type="strand" evidence="15">
    <location>
        <begin position="437"/>
        <end position="444"/>
    </location>
</feature>
<feature type="strand" evidence="15">
    <location>
        <begin position="448"/>
        <end position="451"/>
    </location>
</feature>
<feature type="helix" evidence="15">
    <location>
        <begin position="467"/>
        <end position="469"/>
    </location>
</feature>
<feature type="strand" evidence="15">
    <location>
        <begin position="475"/>
        <end position="477"/>
    </location>
</feature>
<feature type="strand" evidence="15">
    <location>
        <begin position="487"/>
        <end position="494"/>
    </location>
</feature>
<feature type="turn" evidence="15">
    <location>
        <begin position="495"/>
        <end position="498"/>
    </location>
</feature>
<feature type="strand" evidence="15">
    <location>
        <begin position="499"/>
        <end position="509"/>
    </location>
</feature>
<feature type="strand" evidence="15">
    <location>
        <begin position="514"/>
        <end position="517"/>
    </location>
</feature>
<feature type="turn" evidence="15">
    <location>
        <begin position="518"/>
        <end position="520"/>
    </location>
</feature>
<feature type="strand" evidence="15">
    <location>
        <begin position="521"/>
        <end position="525"/>
    </location>
</feature>
<feature type="strand" evidence="15">
    <location>
        <begin position="529"/>
        <end position="535"/>
    </location>
</feature>
<feature type="turn" evidence="15">
    <location>
        <begin position="536"/>
        <end position="538"/>
    </location>
</feature>
<feature type="strand" evidence="15">
    <location>
        <begin position="541"/>
        <end position="546"/>
    </location>
</feature>
<feature type="strand" evidence="15">
    <location>
        <begin position="556"/>
        <end position="560"/>
    </location>
</feature>
<feature type="strand" evidence="15">
    <location>
        <begin position="563"/>
        <end position="570"/>
    </location>
</feature>
<feature type="helix" evidence="15">
    <location>
        <begin position="574"/>
        <end position="579"/>
    </location>
</feature>
<feature type="strand" evidence="15">
    <location>
        <begin position="590"/>
        <end position="596"/>
    </location>
</feature>
<feature type="helix" evidence="15">
    <location>
        <begin position="621"/>
        <end position="623"/>
    </location>
</feature>
<feature type="helix" evidence="15">
    <location>
        <begin position="624"/>
        <end position="634"/>
    </location>
</feature>
<feature type="helix" evidence="15">
    <location>
        <begin position="636"/>
        <end position="639"/>
    </location>
</feature>
<feature type="turn" evidence="15">
    <location>
        <begin position="642"/>
        <end position="644"/>
    </location>
</feature>
<feature type="strand" evidence="15">
    <location>
        <begin position="648"/>
        <end position="650"/>
    </location>
</feature>
<feature type="helix" evidence="15">
    <location>
        <begin position="653"/>
        <end position="655"/>
    </location>
</feature>
<feature type="helix" evidence="15">
    <location>
        <begin position="658"/>
        <end position="662"/>
    </location>
</feature>
<feature type="helix" evidence="15">
    <location>
        <begin position="664"/>
        <end position="668"/>
    </location>
</feature>
<feature type="helix" evidence="15">
    <location>
        <begin position="674"/>
        <end position="676"/>
    </location>
</feature>
<feature type="turn" evidence="15">
    <location>
        <begin position="682"/>
        <end position="684"/>
    </location>
</feature>
<feature type="helix" evidence="15">
    <location>
        <begin position="689"/>
        <end position="704"/>
    </location>
</feature>
<evidence type="ECO:0000255" key="1">
    <source>
        <dbReference type="PROSITE-ProRule" id="PRU00433"/>
    </source>
</evidence>
<evidence type="ECO:0000269" key="2">
    <source>
    </source>
</evidence>
<evidence type="ECO:0000269" key="3">
    <source>
    </source>
</evidence>
<evidence type="ECO:0000269" key="4">
    <source>
    </source>
</evidence>
<evidence type="ECO:0000269" key="5">
    <source>
    </source>
</evidence>
<evidence type="ECO:0000303" key="6">
    <source>
    </source>
</evidence>
<evidence type="ECO:0000303" key="7">
    <source>
    </source>
</evidence>
<evidence type="ECO:0000303" key="8">
    <source>
    </source>
</evidence>
<evidence type="ECO:0000305" key="9"/>
<evidence type="ECO:0000305" key="10">
    <source>
    </source>
</evidence>
<evidence type="ECO:0000305" key="11">
    <source>
    </source>
</evidence>
<evidence type="ECO:0000305" key="12">
    <source>
    </source>
</evidence>
<evidence type="ECO:0000305" key="13">
    <source>
    </source>
</evidence>
<evidence type="ECO:0007744" key="14">
    <source>
        <dbReference type="PDB" id="1KB0"/>
    </source>
</evidence>
<evidence type="ECO:0007829" key="15">
    <source>
        <dbReference type="PDB" id="1KB0"/>
    </source>
</evidence>
<protein>
    <recommendedName>
        <fullName evidence="7">Quinohemoprotein alcohol dehydrogenase</fullName>
        <shortName evidence="6">QH-ADH</shortName>
        <ecNumber evidence="3">1.1.9.1</ecNumber>
    </recommendedName>
    <alternativeName>
        <fullName evidence="9">Alcohol dehydrogenase (azurin)</fullName>
    </alternativeName>
    <alternativeName>
        <fullName evidence="6">PQQ-containing alcohol dehydrogenase</fullName>
    </alternativeName>
    <alternativeName>
        <fullName evidence="6">PQQ-dependent ADH</fullName>
    </alternativeName>
    <alternativeName>
        <fullName evidence="8">Quinohaemoprotein ethanol dehydrogenase type I</fullName>
        <shortName evidence="8">QH-EDHI</shortName>
    </alternativeName>
</protein>
<comment type="function">
    <text evidence="3 12">Catalyzes the dye-linked oxidation of primary alcohols to the corresponding aldehydes and the (subsequent) oxidation of the aldehydes to carboxylic acids. Methanol is not a substrate.</text>
</comment>
<comment type="catalytic activity">
    <reaction evidence="3">
        <text>2 oxidized [azurin] + a primary alcohol = 2 reduced [azurin] + an aldehyde + 2 H(+)</text>
        <dbReference type="Rhea" id="RHEA:51148"/>
        <dbReference type="Rhea" id="RHEA-COMP:11034"/>
        <dbReference type="Rhea" id="RHEA-COMP:11035"/>
        <dbReference type="ChEBI" id="CHEBI:15378"/>
        <dbReference type="ChEBI" id="CHEBI:15734"/>
        <dbReference type="ChEBI" id="CHEBI:17478"/>
        <dbReference type="ChEBI" id="CHEBI:29036"/>
        <dbReference type="ChEBI" id="CHEBI:49552"/>
        <dbReference type="EC" id="1.1.9.1"/>
    </reaction>
</comment>
<comment type="cofactor">
    <cofactor evidence="2 3 12 13">
        <name>pyrroloquinoline quinone</name>
        <dbReference type="ChEBI" id="CHEBI:58442"/>
    </cofactor>
    <text evidence="2 3">Binds 1 PQQ group per subunit (PubMed:11714714, PubMed:3521592). PQQ is inserted between disulfide Cys-147-Cys-148 and the plane of Trp-276 (PubMed:11714714).</text>
</comment>
<comment type="cofactor">
    <cofactor evidence="2 3 12 13">
        <name>Ca(2+)</name>
        <dbReference type="ChEBI" id="CHEBI:29108"/>
    </cofactor>
    <text evidence="2">Binds 1 Ca(2+) ion per subunit.</text>
</comment>
<comment type="cofactor">
    <cofactor evidence="2 3 12 13">
        <name>heme c</name>
        <dbReference type="ChEBI" id="CHEBI:61717"/>
    </cofactor>
    <text evidence="2 3">Binds 1 heme c group per subunit.</text>
</comment>
<comment type="biophysicochemical properties">
    <kinetics>
        <KM evidence="3">5 uM for benzyl alcohol</KM>
        <KM evidence="3">5 uM for butan-1-ol</KM>
        <KM evidence="3">5 uM for pentan-1-ol</KM>
        <KM evidence="3">5 uM for octan-1-ol</KM>
        <KM evidence="3">40 uM for octanal</KM>
        <KM evidence="3">60 uM for propan-1-ol</KM>
        <KM evidence="3">100 uM for butyraldehyde</KM>
        <KM evidence="3">200 uM for 6-aminohexan-1-ol</KM>
        <KM evidence="3">280 uM for butan-1,3-diol</KM>
        <KM evidence="3">900 uM for acetaldehyde</KM>
        <KM evidence="3">3 mM for formaldehyde</KM>
        <KM evidence="3">5 mM for ethanol</KM>
    </kinetics>
    <phDependence>
        <text evidence="3">Optimum pH is 7.7.</text>
    </phDependence>
</comment>
<comment type="subunit">
    <text evidence="3">Monomer.</text>
</comment>
<comment type="subcellular location">
    <subcellularLocation>
        <location evidence="11">Periplasm</location>
    </subcellularLocation>
</comment>
<comment type="induction">
    <text evidence="13">By ethanol and butanol.</text>
</comment>
<comment type="PTM">
    <text evidence="2">In the crystallographic structures Trp-543 is oxidized to 2'-hydroxytryptophan.</text>
</comment>
<comment type="similarity">
    <text evidence="9">Belongs to the bacterial PQQ dehydrogenase family.</text>
</comment>
<comment type="caution">
    <text evidence="10">The oxidation form of Trp-543 is subject of controversy and could be the artifactual result of sample handling.</text>
</comment>
<keyword id="KW-0002">3D-structure</keyword>
<keyword id="KW-0106">Calcium</keyword>
<keyword id="KW-0903">Direct protein sequencing</keyword>
<keyword id="KW-1015">Disulfide bond</keyword>
<keyword id="KW-0349">Heme</keyword>
<keyword id="KW-0408">Iron</keyword>
<keyword id="KW-0479">Metal-binding</keyword>
<keyword id="KW-0560">Oxidoreductase</keyword>
<keyword id="KW-0574">Periplasm</keyword>
<keyword id="KW-0634">PQQ</keyword>
<keyword id="KW-0732">Signal</keyword>